<dbReference type="EC" id="1.10.3.9" evidence="2"/>
<dbReference type="EMBL" id="DQ673255">
    <property type="protein sequence ID" value="ABG74623.1"/>
    <property type="molecule type" value="Genomic_DNA"/>
</dbReference>
<dbReference type="RefSeq" id="YP_778485.1">
    <property type="nucleotide sequence ID" value="NC_008407.1"/>
</dbReference>
<dbReference type="SMR" id="Q06RD6"/>
<dbReference type="GeneID" id="4319815"/>
<dbReference type="GO" id="GO:0009535">
    <property type="term" value="C:chloroplast thylakoid membrane"/>
    <property type="evidence" value="ECO:0007669"/>
    <property type="project" value="UniProtKB-SubCell"/>
</dbReference>
<dbReference type="GO" id="GO:0009523">
    <property type="term" value="C:photosystem II"/>
    <property type="evidence" value="ECO:0007669"/>
    <property type="project" value="UniProtKB-KW"/>
</dbReference>
<dbReference type="GO" id="GO:0016168">
    <property type="term" value="F:chlorophyll binding"/>
    <property type="evidence" value="ECO:0007669"/>
    <property type="project" value="UniProtKB-UniRule"/>
</dbReference>
<dbReference type="GO" id="GO:0045156">
    <property type="term" value="F:electron transporter, transferring electrons within the cyclic electron transport pathway of photosynthesis activity"/>
    <property type="evidence" value="ECO:0007669"/>
    <property type="project" value="InterPro"/>
</dbReference>
<dbReference type="GO" id="GO:0005506">
    <property type="term" value="F:iron ion binding"/>
    <property type="evidence" value="ECO:0007669"/>
    <property type="project" value="UniProtKB-UniRule"/>
</dbReference>
<dbReference type="GO" id="GO:0010242">
    <property type="term" value="F:oxygen evolving activity"/>
    <property type="evidence" value="ECO:0007669"/>
    <property type="project" value="UniProtKB-EC"/>
</dbReference>
<dbReference type="GO" id="GO:0009772">
    <property type="term" value="P:photosynthetic electron transport in photosystem II"/>
    <property type="evidence" value="ECO:0007669"/>
    <property type="project" value="InterPro"/>
</dbReference>
<dbReference type="CDD" id="cd09288">
    <property type="entry name" value="Photosystem-II_D2"/>
    <property type="match status" value="1"/>
</dbReference>
<dbReference type="FunFam" id="1.20.85.10:FF:000001">
    <property type="entry name" value="photosystem II D2 protein-like"/>
    <property type="match status" value="1"/>
</dbReference>
<dbReference type="Gene3D" id="1.20.85.10">
    <property type="entry name" value="Photosystem II protein D1-like"/>
    <property type="match status" value="1"/>
</dbReference>
<dbReference type="HAMAP" id="MF_01383">
    <property type="entry name" value="PSII_PsbD_D2"/>
    <property type="match status" value="1"/>
</dbReference>
<dbReference type="InterPro" id="IPR055266">
    <property type="entry name" value="D1/D2"/>
</dbReference>
<dbReference type="InterPro" id="IPR036854">
    <property type="entry name" value="Photo_II_D1/D2_sf"/>
</dbReference>
<dbReference type="InterPro" id="IPR000484">
    <property type="entry name" value="Photo_RC_L/M"/>
</dbReference>
<dbReference type="InterPro" id="IPR055265">
    <property type="entry name" value="Photo_RC_L/M_CS"/>
</dbReference>
<dbReference type="InterPro" id="IPR005868">
    <property type="entry name" value="PSII_PsbD/D2"/>
</dbReference>
<dbReference type="NCBIfam" id="TIGR01152">
    <property type="entry name" value="psbD"/>
    <property type="match status" value="1"/>
</dbReference>
<dbReference type="PANTHER" id="PTHR33149:SF12">
    <property type="entry name" value="PHOTOSYSTEM II D2 PROTEIN"/>
    <property type="match status" value="1"/>
</dbReference>
<dbReference type="PANTHER" id="PTHR33149">
    <property type="entry name" value="PHOTOSYSTEM II PROTEIN D1"/>
    <property type="match status" value="1"/>
</dbReference>
<dbReference type="Pfam" id="PF00124">
    <property type="entry name" value="Photo_RC"/>
    <property type="match status" value="1"/>
</dbReference>
<dbReference type="PRINTS" id="PR00256">
    <property type="entry name" value="REACTNCENTRE"/>
</dbReference>
<dbReference type="SUPFAM" id="SSF81483">
    <property type="entry name" value="Bacterial photosystem II reaction centre, L and M subunits"/>
    <property type="match status" value="1"/>
</dbReference>
<dbReference type="PROSITE" id="PS00244">
    <property type="entry name" value="REACTION_CENTER"/>
    <property type="match status" value="1"/>
</dbReference>
<evidence type="ECO:0000250" key="1">
    <source>
        <dbReference type="UniProtKB" id="P56761"/>
    </source>
</evidence>
<evidence type="ECO:0000255" key="2">
    <source>
        <dbReference type="HAMAP-Rule" id="MF_01383"/>
    </source>
</evidence>
<protein>
    <recommendedName>
        <fullName evidence="2">Photosystem II D2 protein</fullName>
        <shortName evidence="2">PSII D2 protein</shortName>
        <ecNumber evidence="2">1.10.3.9</ecNumber>
    </recommendedName>
    <alternativeName>
        <fullName evidence="2">Photosystem Q(A) protein</fullName>
    </alternativeName>
</protein>
<comment type="function">
    <text evidence="2">Photosystem II (PSII) is a light-driven water:plastoquinone oxidoreductase that uses light energy to abstract electrons from H(2)O, generating O(2) and a proton gradient subsequently used for ATP formation. It consists of a core antenna complex that captures photons, and an electron transfer chain that converts photonic excitation into a charge separation. The D1/D2 (PsbA/PsbD) reaction center heterodimer binds P680, the primary electron donor of PSII as well as several subsequent electron acceptors. D2 is needed for assembly of a stable PSII complex.</text>
</comment>
<comment type="catalytic activity">
    <reaction evidence="2">
        <text>2 a plastoquinone + 4 hnu + 2 H2O = 2 a plastoquinol + O2</text>
        <dbReference type="Rhea" id="RHEA:36359"/>
        <dbReference type="Rhea" id="RHEA-COMP:9561"/>
        <dbReference type="Rhea" id="RHEA-COMP:9562"/>
        <dbReference type="ChEBI" id="CHEBI:15377"/>
        <dbReference type="ChEBI" id="CHEBI:15379"/>
        <dbReference type="ChEBI" id="CHEBI:17757"/>
        <dbReference type="ChEBI" id="CHEBI:30212"/>
        <dbReference type="ChEBI" id="CHEBI:62192"/>
        <dbReference type="EC" id="1.10.3.9"/>
    </reaction>
</comment>
<comment type="cofactor">
    <text evidence="2">The D1/D2 heterodimer binds P680, chlorophylls that are the primary electron donor of PSII, and subsequent electron acceptors. It shares a non-heme iron and each subunit binds pheophytin, quinone, additional chlorophylls, carotenoids and lipids. There is also a Cl(-1) ion associated with D1 and D2, which is required for oxygen evolution. The PSII complex binds additional chlorophylls, carotenoids and specific lipids.</text>
</comment>
<comment type="subunit">
    <text evidence="2">PSII is composed of 1 copy each of membrane proteins PsbA, PsbB, PsbC, PsbD, PsbE, PsbF, PsbH, PsbI, PsbJ, PsbK, PsbL, PsbM, PsbT, PsbX, PsbY, PsbZ, Psb30/Ycf12, at least 3 peripheral proteins of the oxygen-evolving complex and a large number of cofactors. It forms dimeric complexes.</text>
</comment>
<comment type="subcellular location">
    <subcellularLocation>
        <location evidence="2">Plastid</location>
        <location evidence="2">Chloroplast thylakoid membrane</location>
        <topology evidence="2">Multi-pass membrane protein</topology>
    </subcellularLocation>
</comment>
<comment type="miscellaneous">
    <text evidence="2">2 of the reaction center chlorophylls (ChlD1 and ChlD2) are entirely coordinated by water.</text>
</comment>
<comment type="similarity">
    <text evidence="2">Belongs to the reaction center PufL/M/PsbA/D family.</text>
</comment>
<geneLocation type="chloroplast"/>
<feature type="initiator methionine" description="Removed" evidence="1">
    <location>
        <position position="1"/>
    </location>
</feature>
<feature type="chain" id="PRO_0000359659" description="Photosystem II D2 protein">
    <location>
        <begin position="2"/>
        <end position="353"/>
    </location>
</feature>
<feature type="transmembrane region" description="Helical" evidence="2">
    <location>
        <begin position="41"/>
        <end position="61"/>
    </location>
</feature>
<feature type="transmembrane region" description="Helical" evidence="2">
    <location>
        <begin position="125"/>
        <end position="141"/>
    </location>
</feature>
<feature type="transmembrane region" description="Helical" evidence="2">
    <location>
        <begin position="153"/>
        <end position="166"/>
    </location>
</feature>
<feature type="transmembrane region" description="Helical" evidence="2">
    <location>
        <begin position="208"/>
        <end position="228"/>
    </location>
</feature>
<feature type="transmembrane region" description="Helical" evidence="2">
    <location>
        <begin position="279"/>
        <end position="295"/>
    </location>
</feature>
<feature type="binding site" description="axial binding residue" evidence="2">
    <location>
        <position position="118"/>
    </location>
    <ligand>
        <name>chlorophyll a</name>
        <dbReference type="ChEBI" id="CHEBI:58416"/>
        <label>ChlzD2</label>
    </ligand>
    <ligandPart>
        <name>Mg</name>
        <dbReference type="ChEBI" id="CHEBI:25107"/>
    </ligandPart>
</feature>
<feature type="binding site" evidence="2">
    <location>
        <position position="130"/>
    </location>
    <ligand>
        <name>pheophytin a</name>
        <dbReference type="ChEBI" id="CHEBI:136840"/>
        <label>D2</label>
    </ligand>
</feature>
<feature type="binding site" evidence="2">
    <location>
        <position position="143"/>
    </location>
    <ligand>
        <name>pheophytin a</name>
        <dbReference type="ChEBI" id="CHEBI:136840"/>
        <label>D2</label>
    </ligand>
</feature>
<feature type="binding site" description="axial binding residue" evidence="2">
    <location>
        <position position="198"/>
    </location>
    <ligand>
        <name>chlorophyll a</name>
        <dbReference type="ChEBI" id="CHEBI:58416"/>
        <label>PD2</label>
    </ligand>
    <ligandPart>
        <name>Mg</name>
        <dbReference type="ChEBI" id="CHEBI:25107"/>
    </ligandPart>
</feature>
<feature type="binding site" evidence="2">
    <location>
        <position position="215"/>
    </location>
    <ligand>
        <name>a plastoquinone</name>
        <dbReference type="ChEBI" id="CHEBI:17757"/>
        <label>Q(A)</label>
    </ligand>
</feature>
<feature type="binding site" evidence="2">
    <location>
        <position position="215"/>
    </location>
    <ligand>
        <name>Fe cation</name>
        <dbReference type="ChEBI" id="CHEBI:24875"/>
        <note>ligand shared with heterodimeric partner</note>
    </ligand>
</feature>
<feature type="binding site" evidence="2">
    <location>
        <position position="262"/>
    </location>
    <ligand>
        <name>a plastoquinone</name>
        <dbReference type="ChEBI" id="CHEBI:17757"/>
        <label>Q(A)</label>
    </ligand>
</feature>
<feature type="binding site" evidence="2">
    <location>
        <position position="269"/>
    </location>
    <ligand>
        <name>Fe cation</name>
        <dbReference type="ChEBI" id="CHEBI:24875"/>
        <note>ligand shared with heterodimeric partner</note>
    </ligand>
</feature>
<feature type="modified residue" description="N-acetylthreonine" evidence="1">
    <location>
        <position position="2"/>
    </location>
</feature>
<feature type="modified residue" description="Phosphothreonine" evidence="1">
    <location>
        <position position="2"/>
    </location>
</feature>
<sequence>MTIALGKFTKDEKDLFDIMDDWLRRDRFVFVGWSGLLLFPCAYFAVGGWFTGTTFVTSWYTHGLASSYLEGCNFLTAAVSTPANSLAHSLLLLWGPEAQGDFTRWCQLGGLWTFVALHGAFGLIGFMLRQFELARSVQLRPYNAIAFSGPIAVFVSVFLIYPLGQSGWFFAPSFGVAAIFRFILFFQGFHNWTLNPFHMMGVAGVLGAALLCAIHGATVENTLFEDGDGANTFRAFNPTQAEETYSMVTANRFWSQIFGVAFSNKRWLHFFMLFVPVTGLWMSALGVVGLALNLRAYDFVSQEIRAAEDPEFETFYTKNILLNEGIRAWMAAQDQPHENLIFPEEVLPRGNAL</sequence>
<organism>
    <name type="scientific">Jasminum nudiflorum</name>
    <name type="common">Winter jasmine</name>
    <dbReference type="NCBI Taxonomy" id="126431"/>
    <lineage>
        <taxon>Eukaryota</taxon>
        <taxon>Viridiplantae</taxon>
        <taxon>Streptophyta</taxon>
        <taxon>Embryophyta</taxon>
        <taxon>Tracheophyta</taxon>
        <taxon>Spermatophyta</taxon>
        <taxon>Magnoliopsida</taxon>
        <taxon>eudicotyledons</taxon>
        <taxon>Gunneridae</taxon>
        <taxon>Pentapetalae</taxon>
        <taxon>asterids</taxon>
        <taxon>lamiids</taxon>
        <taxon>Lamiales</taxon>
        <taxon>Oleaceae</taxon>
        <taxon>Jasmineae</taxon>
        <taxon>Jasminum</taxon>
    </lineage>
</organism>
<name>PSBD_JASNU</name>
<proteinExistence type="inferred from homology"/>
<gene>
    <name evidence="2" type="primary">psbD</name>
    <name type="ORF">JNC00354</name>
</gene>
<keyword id="KW-0007">Acetylation</keyword>
<keyword id="KW-0148">Chlorophyll</keyword>
<keyword id="KW-0150">Chloroplast</keyword>
<keyword id="KW-0157">Chromophore</keyword>
<keyword id="KW-0249">Electron transport</keyword>
<keyword id="KW-0408">Iron</keyword>
<keyword id="KW-0460">Magnesium</keyword>
<keyword id="KW-0472">Membrane</keyword>
<keyword id="KW-0479">Metal-binding</keyword>
<keyword id="KW-0560">Oxidoreductase</keyword>
<keyword id="KW-0597">Phosphoprotein</keyword>
<keyword id="KW-0602">Photosynthesis</keyword>
<keyword id="KW-0604">Photosystem II</keyword>
<keyword id="KW-0934">Plastid</keyword>
<keyword id="KW-0793">Thylakoid</keyword>
<keyword id="KW-0812">Transmembrane</keyword>
<keyword id="KW-1133">Transmembrane helix</keyword>
<keyword id="KW-0813">Transport</keyword>
<reference key="1">
    <citation type="journal article" date="2007" name="Mol. Biol. Evol.">
        <title>Gene relocations within chloroplast genomes of Jasminum and Menodora (Oleaceae) are due to multiple, overlapping inversions.</title>
        <authorList>
            <person name="Lee H.-L."/>
            <person name="Jansen R.K."/>
            <person name="Chumley T.W."/>
            <person name="Kim K.-J."/>
        </authorList>
    </citation>
    <scope>NUCLEOTIDE SEQUENCE [LARGE SCALE GENOMIC DNA]</scope>
</reference>
<accession>Q06RD6</accession>